<reference evidence="4" key="1">
    <citation type="journal article" date="2015" name="Peptides">
        <title>Host-defense and trefoil factor family peptides in skin secretions of the Mawa clawed frog Xenopus boumbaensis (Pipidae).</title>
        <authorList>
            <person name="Conlon J.M."/>
            <person name="Mechkarska M."/>
            <person name="Kolodziejek J."/>
            <person name="Leprince J."/>
            <person name="Coquet L."/>
            <person name="Jouenne T."/>
            <person name="Vaudry H."/>
            <person name="Nowotny N."/>
            <person name="King J.D."/>
        </authorList>
    </citation>
    <scope>PROTEIN SEQUENCE</scope>
    <scope>SUBCELLULAR LOCATION</scope>
    <scope>MASS SPECTROMETRY</scope>
    <source>
        <tissue evidence="3">Skin secretion</tissue>
    </source>
</reference>
<dbReference type="GO" id="GO:0005576">
    <property type="term" value="C:extracellular region"/>
    <property type="evidence" value="ECO:0007669"/>
    <property type="project" value="UniProtKB-SubCell"/>
</dbReference>
<dbReference type="GO" id="GO:0006952">
    <property type="term" value="P:defense response"/>
    <property type="evidence" value="ECO:0007669"/>
    <property type="project" value="UniProtKB-KW"/>
</dbReference>
<proteinExistence type="evidence at protein level"/>
<accession>C0HKM1</accession>
<name>XFBM2_XENBM</name>
<comment type="function">
    <text evidence="1">Antimicrobial peptide.</text>
</comment>
<comment type="subcellular location">
    <subcellularLocation>
        <location evidence="2">Secreted</location>
    </subcellularLocation>
</comment>
<comment type="tissue specificity">
    <text evidence="5">Expressed by the skin glands.</text>
</comment>
<comment type="mass spectrometry" mass="2691.6" method="MALDI" evidence="2"/>
<comment type="similarity">
    <text evidence="4">Belongs to the gastrin/cholecystokinin family. Magainin subfamily.</text>
</comment>
<evidence type="ECO:0000250" key="1">
    <source>
        <dbReference type="UniProtKB" id="C0HK86"/>
    </source>
</evidence>
<evidence type="ECO:0000269" key="2">
    <source>
    </source>
</evidence>
<evidence type="ECO:0000303" key="3">
    <source>
    </source>
</evidence>
<evidence type="ECO:0000305" key="4"/>
<evidence type="ECO:0000305" key="5">
    <source>
    </source>
</evidence>
<organism evidence="3">
    <name type="scientific">Xenopus boumbaensis</name>
    <name type="common">Mawa clawed frog</name>
    <dbReference type="NCBI Taxonomy" id="288550"/>
    <lineage>
        <taxon>Eukaryota</taxon>
        <taxon>Metazoa</taxon>
        <taxon>Chordata</taxon>
        <taxon>Craniata</taxon>
        <taxon>Vertebrata</taxon>
        <taxon>Euteleostomi</taxon>
        <taxon>Amphibia</taxon>
        <taxon>Batrachia</taxon>
        <taxon>Anura</taxon>
        <taxon>Pipoidea</taxon>
        <taxon>Pipidae</taxon>
        <taxon>Xenopodinae</taxon>
        <taxon>Xenopus</taxon>
        <taxon>Xenopus</taxon>
    </lineage>
</organism>
<protein>
    <recommendedName>
        <fullName evidence="3">Xenoposin precursor fragment BM2</fullName>
    </recommendedName>
    <alternativeName>
        <fullName evidence="3">XPF-BM2</fullName>
    </alternativeName>
</protein>
<keyword id="KW-0878">Amphibian defense peptide</keyword>
<keyword id="KW-0929">Antimicrobial</keyword>
<keyword id="KW-0903">Direct protein sequencing</keyword>
<keyword id="KW-0964">Secreted</keyword>
<feature type="peptide" id="PRO_0000440798" description="Xenoposin precursor fragment BM2" evidence="2">
    <location>
        <begin position="1"/>
        <end position="25"/>
    </location>
</feature>
<sequence length="25" mass="2692">GWASKIGETLGKMAKVGLHELIQPK</sequence>